<sequence length="97" mass="11578">MYIENNSLVLIIPETNSITPQLFTIHDNKPICVCSRYSLIPSKKENVQISYIDNIHMYFRSFKNLYLVNPRNHDIIKVFNFLKNYKWGGNFYLLFNV</sequence>
<keyword id="KW-1035">Host cytoplasm</keyword>
<keyword id="KW-0426">Late protein</keyword>
<keyword id="KW-1185">Reference proteome</keyword>
<keyword id="KW-0946">Virion</keyword>
<name>A15_FOWPN</name>
<evidence type="ECO:0000250" key="1"/>
<evidence type="ECO:0000305" key="2"/>
<protein>
    <recommendedName>
        <fullName>Core protein A15 homolog</fullName>
    </recommendedName>
</protein>
<comment type="function">
    <text evidence="1">Late protein which is a part of a large complex required for early virion morphogenesis. This complex participates in the formation of virosomes and the incorporation of virosomal contents into nascent immature virions. A15 is required for the stability and kinase activity of F10 (By similarity).</text>
</comment>
<comment type="subunit">
    <text evidence="1">Part of a complex composed of A30, G7, F10 kinase, A15, D2, D3, and J1.</text>
</comment>
<comment type="subcellular location">
    <subcellularLocation>
        <location evidence="1">Host cytoplasm</location>
    </subcellularLocation>
    <subcellularLocation>
        <location>Virion</location>
    </subcellularLocation>
    <text evidence="1">Localizes in cytoplasmic virus factories and present in the virion core.</text>
</comment>
<comment type="similarity">
    <text evidence="2">Belongs to the chordopoxvirinae A15 family.</text>
</comment>
<organismHost>
    <name type="scientific">Vertebrata</name>
    <dbReference type="NCBI Taxonomy" id="7742"/>
</organismHost>
<proteinExistence type="inferred from homology"/>
<accession>Q9J553</accession>
<feature type="chain" id="PRO_0000099249" description="Core protein A15 homolog">
    <location>
        <begin position="1"/>
        <end position="97"/>
    </location>
</feature>
<dbReference type="EMBL" id="AF198100">
    <property type="protein sequence ID" value="AAF44524.1"/>
    <property type="molecule type" value="Genomic_DNA"/>
</dbReference>
<dbReference type="RefSeq" id="NP_039143.1">
    <property type="nucleotide sequence ID" value="NC_002188.1"/>
</dbReference>
<dbReference type="GeneID" id="1486728"/>
<dbReference type="KEGG" id="vg:1486728"/>
<dbReference type="Proteomes" id="UP000008597">
    <property type="component" value="Segment"/>
</dbReference>
<dbReference type="GO" id="GO:0030430">
    <property type="term" value="C:host cell cytoplasm"/>
    <property type="evidence" value="ECO:0007669"/>
    <property type="project" value="UniProtKB-SubCell"/>
</dbReference>
<dbReference type="GO" id="GO:0044423">
    <property type="term" value="C:virion component"/>
    <property type="evidence" value="ECO:0007669"/>
    <property type="project" value="UniProtKB-KW"/>
</dbReference>
<dbReference type="InterPro" id="IPR008445">
    <property type="entry name" value="A15"/>
</dbReference>
<dbReference type="Pfam" id="PF05846">
    <property type="entry name" value="Chordopox_A15"/>
    <property type="match status" value="1"/>
</dbReference>
<reference key="1">
    <citation type="journal article" date="2000" name="J. Virol.">
        <title>The genome of fowlpox virus.</title>
        <authorList>
            <person name="Afonso C.L."/>
            <person name="Tulman E.R."/>
            <person name="Lu Z."/>
            <person name="Zsak L."/>
            <person name="Kutish G.F."/>
            <person name="Rock D.L."/>
        </authorList>
    </citation>
    <scope>NUCLEOTIDE SEQUENCE [LARGE SCALE GENOMIC DNA]</scope>
</reference>
<organism>
    <name type="scientific">Fowlpox virus (strain NVSL)</name>
    <name type="common">FPV</name>
    <dbReference type="NCBI Taxonomy" id="928301"/>
    <lineage>
        <taxon>Viruses</taxon>
        <taxon>Varidnaviria</taxon>
        <taxon>Bamfordvirae</taxon>
        <taxon>Nucleocytoviricota</taxon>
        <taxon>Pokkesviricetes</taxon>
        <taxon>Chitovirales</taxon>
        <taxon>Poxviridae</taxon>
        <taxon>Chordopoxvirinae</taxon>
        <taxon>Avipoxvirus</taxon>
        <taxon>Fowlpox virus</taxon>
    </lineage>
</organism>
<gene>
    <name type="ordered locus">FPV180</name>
</gene>